<accession>Q68XS2</accession>
<comment type="function">
    <text evidence="1">Catalyzes the transfer of the diacylglyceryl group from phosphatidylglycerol to the sulfhydryl group of the N-terminal cysteine of a prolipoprotein, the first step in the formation of mature lipoproteins.</text>
</comment>
<comment type="catalytic activity">
    <reaction evidence="1">
        <text>L-cysteinyl-[prolipoprotein] + a 1,2-diacyl-sn-glycero-3-phospho-(1'-sn-glycerol) = an S-1,2-diacyl-sn-glyceryl-L-cysteinyl-[prolipoprotein] + sn-glycerol 1-phosphate + H(+)</text>
        <dbReference type="Rhea" id="RHEA:56712"/>
        <dbReference type="Rhea" id="RHEA-COMP:14679"/>
        <dbReference type="Rhea" id="RHEA-COMP:14680"/>
        <dbReference type="ChEBI" id="CHEBI:15378"/>
        <dbReference type="ChEBI" id="CHEBI:29950"/>
        <dbReference type="ChEBI" id="CHEBI:57685"/>
        <dbReference type="ChEBI" id="CHEBI:64716"/>
        <dbReference type="ChEBI" id="CHEBI:140658"/>
        <dbReference type="EC" id="2.5.1.145"/>
    </reaction>
</comment>
<comment type="pathway">
    <text evidence="1">Protein modification; lipoprotein biosynthesis (diacylglyceryl transfer).</text>
</comment>
<comment type="subcellular location">
    <subcellularLocation>
        <location evidence="1">Cell inner membrane</location>
        <topology evidence="1">Multi-pass membrane protein</topology>
    </subcellularLocation>
</comment>
<comment type="similarity">
    <text evidence="1">Belongs to the Lgt family.</text>
</comment>
<keyword id="KW-0997">Cell inner membrane</keyword>
<keyword id="KW-1003">Cell membrane</keyword>
<keyword id="KW-0472">Membrane</keyword>
<keyword id="KW-0808">Transferase</keyword>
<keyword id="KW-0812">Transmembrane</keyword>
<keyword id="KW-1133">Transmembrane helix</keyword>
<reference key="1">
    <citation type="journal article" date="2004" name="J. Bacteriol.">
        <title>Complete genome sequence of Rickettsia typhi and comparison with sequences of other Rickettsiae.</title>
        <authorList>
            <person name="McLeod M.P."/>
            <person name="Qin X."/>
            <person name="Karpathy S.E."/>
            <person name="Gioia J."/>
            <person name="Highlander S.K."/>
            <person name="Fox G.E."/>
            <person name="McNeill T.Z."/>
            <person name="Jiang H."/>
            <person name="Muzny D."/>
            <person name="Jacob L.S."/>
            <person name="Hawes A.C."/>
            <person name="Sodergren E."/>
            <person name="Gill R."/>
            <person name="Hume J."/>
            <person name="Morgan M."/>
            <person name="Fan G."/>
            <person name="Amin A.G."/>
            <person name="Gibbs R.A."/>
            <person name="Hong C."/>
            <person name="Yu X.-J."/>
            <person name="Walker D.H."/>
            <person name="Weinstock G.M."/>
        </authorList>
    </citation>
    <scope>NUCLEOTIDE SEQUENCE [LARGE SCALE GENOMIC DNA]</scope>
    <source>
        <strain>ATCC VR-144 / Wilmington</strain>
    </source>
</reference>
<sequence>MILPNINPIIFSIGPFSISWYSLSYVVGILLGWFYATKIIEKFKPEITKKHIEDFITYAIIGIIVGGRLGYVLLYNPLKYFANPIEILKTYEGGMSFHGATIGIIISAYLFCQKYKINFLSLTDIITTVVPIGLFLGRIANFINCELYGRITNSSFGIIFPNSDLEPRHPSQLYEAFFEGLILFCILAYAVFRHDTLKKQGLNSGIYLIFYSLFRIIIEMFREPDIQIGFILDSLTMGQILSAPMLLLGSYLICRLNSK</sequence>
<feature type="chain" id="PRO_0000172665" description="Phosphatidylglycerol--prolipoprotein diacylglyceryl transferase">
    <location>
        <begin position="1"/>
        <end position="259"/>
    </location>
</feature>
<feature type="transmembrane region" description="Helical" evidence="1">
    <location>
        <begin position="9"/>
        <end position="29"/>
    </location>
</feature>
<feature type="transmembrane region" description="Helical" evidence="1">
    <location>
        <begin position="55"/>
        <end position="75"/>
    </location>
</feature>
<feature type="transmembrane region" description="Helical" evidence="1">
    <location>
        <begin position="92"/>
        <end position="112"/>
    </location>
</feature>
<feature type="transmembrane region" description="Helical" evidence="1">
    <location>
        <begin position="117"/>
        <end position="137"/>
    </location>
</feature>
<feature type="transmembrane region" description="Helical" evidence="1">
    <location>
        <begin position="172"/>
        <end position="192"/>
    </location>
</feature>
<feature type="transmembrane region" description="Helical" evidence="1">
    <location>
        <begin position="201"/>
        <end position="221"/>
    </location>
</feature>
<feature type="transmembrane region" description="Helical" evidence="1">
    <location>
        <begin position="228"/>
        <end position="248"/>
    </location>
</feature>
<feature type="binding site" evidence="1">
    <location>
        <position position="138"/>
    </location>
    <ligand>
        <name>a 1,2-diacyl-sn-glycero-3-phospho-(1'-sn-glycerol)</name>
        <dbReference type="ChEBI" id="CHEBI:64716"/>
    </ligand>
</feature>
<name>LGT_RICTY</name>
<evidence type="ECO:0000255" key="1">
    <source>
        <dbReference type="HAMAP-Rule" id="MF_01147"/>
    </source>
</evidence>
<dbReference type="EC" id="2.5.1.145" evidence="1"/>
<dbReference type="EMBL" id="AE017197">
    <property type="protein sequence ID" value="AAU03570.1"/>
    <property type="molecule type" value="Genomic_DNA"/>
</dbReference>
<dbReference type="RefSeq" id="WP_011190557.1">
    <property type="nucleotide sequence ID" value="NC_006142.1"/>
</dbReference>
<dbReference type="SMR" id="Q68XS2"/>
<dbReference type="KEGG" id="rty:RT0084"/>
<dbReference type="eggNOG" id="COG0682">
    <property type="taxonomic scope" value="Bacteria"/>
</dbReference>
<dbReference type="HOGENOM" id="CLU_013386_1_0_5"/>
<dbReference type="OrthoDB" id="871140at2"/>
<dbReference type="UniPathway" id="UPA00664"/>
<dbReference type="Proteomes" id="UP000000604">
    <property type="component" value="Chromosome"/>
</dbReference>
<dbReference type="GO" id="GO:0005886">
    <property type="term" value="C:plasma membrane"/>
    <property type="evidence" value="ECO:0007669"/>
    <property type="project" value="UniProtKB-SubCell"/>
</dbReference>
<dbReference type="GO" id="GO:0008961">
    <property type="term" value="F:phosphatidylglycerol-prolipoprotein diacylglyceryl transferase activity"/>
    <property type="evidence" value="ECO:0007669"/>
    <property type="project" value="UniProtKB-UniRule"/>
</dbReference>
<dbReference type="GO" id="GO:0042158">
    <property type="term" value="P:lipoprotein biosynthetic process"/>
    <property type="evidence" value="ECO:0007669"/>
    <property type="project" value="UniProtKB-UniRule"/>
</dbReference>
<dbReference type="HAMAP" id="MF_01147">
    <property type="entry name" value="Lgt"/>
    <property type="match status" value="1"/>
</dbReference>
<dbReference type="InterPro" id="IPR001640">
    <property type="entry name" value="Lgt"/>
</dbReference>
<dbReference type="NCBIfam" id="TIGR00544">
    <property type="entry name" value="lgt"/>
    <property type="match status" value="1"/>
</dbReference>
<dbReference type="PANTHER" id="PTHR30589:SF0">
    <property type="entry name" value="PHOSPHATIDYLGLYCEROL--PROLIPOPROTEIN DIACYLGLYCERYL TRANSFERASE"/>
    <property type="match status" value="1"/>
</dbReference>
<dbReference type="PANTHER" id="PTHR30589">
    <property type="entry name" value="PROLIPOPROTEIN DIACYLGLYCERYL TRANSFERASE"/>
    <property type="match status" value="1"/>
</dbReference>
<dbReference type="Pfam" id="PF01790">
    <property type="entry name" value="LGT"/>
    <property type="match status" value="1"/>
</dbReference>
<dbReference type="PROSITE" id="PS01311">
    <property type="entry name" value="LGT"/>
    <property type="match status" value="1"/>
</dbReference>
<gene>
    <name evidence="1" type="primary">lgt</name>
    <name type="ordered locus">RT0084</name>
</gene>
<organism>
    <name type="scientific">Rickettsia typhi (strain ATCC VR-144 / Wilmington)</name>
    <dbReference type="NCBI Taxonomy" id="257363"/>
    <lineage>
        <taxon>Bacteria</taxon>
        <taxon>Pseudomonadati</taxon>
        <taxon>Pseudomonadota</taxon>
        <taxon>Alphaproteobacteria</taxon>
        <taxon>Rickettsiales</taxon>
        <taxon>Rickettsiaceae</taxon>
        <taxon>Rickettsieae</taxon>
        <taxon>Rickettsia</taxon>
        <taxon>typhus group</taxon>
    </lineage>
</organism>
<protein>
    <recommendedName>
        <fullName evidence="1">Phosphatidylglycerol--prolipoprotein diacylglyceryl transferase</fullName>
        <ecNumber evidence="1">2.5.1.145</ecNumber>
    </recommendedName>
</protein>
<proteinExistence type="inferred from homology"/>